<feature type="initiator methionine" description="Removed" evidence="1">
    <location>
        <position position="1"/>
    </location>
</feature>
<feature type="chain" id="PRO_0000213440" description="Major sperm protein 38">
    <location>
        <begin position="2"/>
        <end position="127"/>
    </location>
</feature>
<feature type="domain" description="MSP" evidence="2">
    <location>
        <begin position="9"/>
        <end position="126"/>
    </location>
</feature>
<feature type="modified residue" description="N-acetylalanine" evidence="1">
    <location>
        <position position="2"/>
    </location>
</feature>
<organism>
    <name type="scientific">Caenorhabditis elegans</name>
    <dbReference type="NCBI Taxonomy" id="6239"/>
    <lineage>
        <taxon>Eukaryota</taxon>
        <taxon>Metazoa</taxon>
        <taxon>Ecdysozoa</taxon>
        <taxon>Nematoda</taxon>
        <taxon>Chromadorea</taxon>
        <taxon>Rhabditida</taxon>
        <taxon>Rhabditina</taxon>
        <taxon>Rhabditomorpha</taxon>
        <taxon>Rhabditoidea</taxon>
        <taxon>Rhabditidae</taxon>
        <taxon>Peloderinae</taxon>
        <taxon>Caenorhabditis</taxon>
    </lineage>
</organism>
<evidence type="ECO:0000250" key="1"/>
<evidence type="ECO:0000255" key="2">
    <source>
        <dbReference type="PROSITE-ProRule" id="PRU00132"/>
    </source>
</evidence>
<sequence>MAQSVPPGDIQTQPGTKIVFNAPYDDKHTDHIKVINSSARRIGYGIKTTNMKRLGVDPPCGVFDPKEAVLLAVSCDAFAFGQEDTNNDRITVEWTNTPDGAAKQFRREWFQGDGMVRRKNLPIEYNP</sequence>
<proteinExistence type="evidence at transcript level"/>
<dbReference type="EMBL" id="Z68879">
    <property type="protein sequence ID" value="CAA93089.1"/>
    <property type="molecule type" value="Genomic_DNA"/>
</dbReference>
<dbReference type="PIR" id="T23486">
    <property type="entry name" value="T23486"/>
</dbReference>
<dbReference type="RefSeq" id="NP_501849.1">
    <property type="nucleotide sequence ID" value="NM_069448.10"/>
</dbReference>
<dbReference type="SMR" id="P53020"/>
<dbReference type="FunCoup" id="P53020">
    <property type="interactions" value="10"/>
</dbReference>
<dbReference type="STRING" id="6239.K08F4.8.1"/>
<dbReference type="PaxDb" id="6239-K08F4.8"/>
<dbReference type="PeptideAtlas" id="P53020"/>
<dbReference type="EnsemblMetazoa" id="K08F4.8.1">
    <property type="protein sequence ID" value="K08F4.8.1"/>
    <property type="gene ID" value="WBGene00003434"/>
</dbReference>
<dbReference type="GeneID" id="177887"/>
<dbReference type="KEGG" id="cel:CELE_K08F4.8"/>
<dbReference type="UCSC" id="K08F4.8">
    <property type="organism name" value="c. elegans"/>
</dbReference>
<dbReference type="AGR" id="WB:WBGene00003434"/>
<dbReference type="CTD" id="177887"/>
<dbReference type="WormBase" id="K08F4.8">
    <property type="protein sequence ID" value="CE06156"/>
    <property type="gene ID" value="WBGene00003434"/>
    <property type="gene designation" value="msp-38"/>
</dbReference>
<dbReference type="eggNOG" id="ENOG502RXF6">
    <property type="taxonomic scope" value="Eukaryota"/>
</dbReference>
<dbReference type="GeneTree" id="ENSGT00970000195833"/>
<dbReference type="HOGENOM" id="CLU_120664_0_1_1"/>
<dbReference type="InParanoid" id="P53020"/>
<dbReference type="OrthoDB" id="5918453at2759"/>
<dbReference type="PhylomeDB" id="P53020"/>
<dbReference type="PRO" id="PR:P53020"/>
<dbReference type="Proteomes" id="UP000001940">
    <property type="component" value="Chromosome IV"/>
</dbReference>
<dbReference type="Bgee" id="WBGene00003434">
    <property type="expression patterns" value="Expressed in adult organism and 2 other cell types or tissues"/>
</dbReference>
<dbReference type="GO" id="GO:0005737">
    <property type="term" value="C:cytoplasm"/>
    <property type="evidence" value="ECO:0007669"/>
    <property type="project" value="UniProtKB-KW"/>
</dbReference>
<dbReference type="GO" id="GO:0005856">
    <property type="term" value="C:cytoskeleton"/>
    <property type="evidence" value="ECO:0007669"/>
    <property type="project" value="UniProtKB-SubCell"/>
</dbReference>
<dbReference type="GO" id="GO:0031143">
    <property type="term" value="C:pseudopodium"/>
    <property type="evidence" value="ECO:0007669"/>
    <property type="project" value="UniProtKB-SubCell"/>
</dbReference>
<dbReference type="GO" id="GO:0001556">
    <property type="term" value="P:oocyte maturation"/>
    <property type="evidence" value="ECO:0000314"/>
    <property type="project" value="WormBase"/>
</dbReference>
<dbReference type="GO" id="GO:0045987">
    <property type="term" value="P:positive regulation of smooth muscle contraction"/>
    <property type="evidence" value="ECO:0000314"/>
    <property type="project" value="WormBase"/>
</dbReference>
<dbReference type="FunFam" id="2.60.40.10:FF:001120">
    <property type="entry name" value="Major sperm protein 19/31/40/45/50/51/53/59/61/65/81/113/142"/>
    <property type="match status" value="1"/>
</dbReference>
<dbReference type="Gene3D" id="2.60.40.10">
    <property type="entry name" value="Immunoglobulins"/>
    <property type="match status" value="1"/>
</dbReference>
<dbReference type="InterPro" id="IPR013783">
    <property type="entry name" value="Ig-like_fold"/>
</dbReference>
<dbReference type="InterPro" id="IPR000535">
    <property type="entry name" value="MSP_dom"/>
</dbReference>
<dbReference type="InterPro" id="IPR051155">
    <property type="entry name" value="Nematode_MSP"/>
</dbReference>
<dbReference type="InterPro" id="IPR008962">
    <property type="entry name" value="PapD-like_sf"/>
</dbReference>
<dbReference type="PANTHER" id="PTHR22920">
    <property type="entry name" value="MAJOR SPERM PROTEIN"/>
    <property type="match status" value="1"/>
</dbReference>
<dbReference type="PANTHER" id="PTHR22920:SF7">
    <property type="entry name" value="MSP DOMAIN-CONTAINING PROTEIN-RELATED"/>
    <property type="match status" value="1"/>
</dbReference>
<dbReference type="Pfam" id="PF00635">
    <property type="entry name" value="Motile_Sperm"/>
    <property type="match status" value="1"/>
</dbReference>
<dbReference type="SUPFAM" id="SSF49354">
    <property type="entry name" value="PapD-like"/>
    <property type="match status" value="1"/>
</dbReference>
<dbReference type="PROSITE" id="PS50202">
    <property type="entry name" value="MSP"/>
    <property type="match status" value="1"/>
</dbReference>
<keyword id="KW-0007">Acetylation</keyword>
<keyword id="KW-0966">Cell projection</keyword>
<keyword id="KW-0963">Cytoplasm</keyword>
<keyword id="KW-0206">Cytoskeleton</keyword>
<keyword id="KW-1185">Reference proteome</keyword>
<name>MSP38_CAEEL</name>
<reference key="1">
    <citation type="journal article" date="1998" name="Science">
        <title>Genome sequence of the nematode C. elegans: a platform for investigating biology.</title>
        <authorList>
            <consortium name="The C. elegans sequencing consortium"/>
        </authorList>
    </citation>
    <scope>NUCLEOTIDE SEQUENCE [LARGE SCALE GENOMIC DNA]</scope>
    <source>
        <strain>Bristol N2</strain>
    </source>
</reference>
<accession>P53020</accession>
<comment type="function">
    <text>Central component in molecular interactions underlying sperm crawling. Forms an extensive filament system that extends from sperm villipoda, along the leading edge of the pseudopod.</text>
</comment>
<comment type="subcellular location">
    <subcellularLocation>
        <location>Cell projection</location>
        <location>Pseudopodium</location>
    </subcellularLocation>
    <subcellularLocation>
        <location>Cytoplasm</location>
        <location>Cytoskeleton</location>
    </subcellularLocation>
</comment>
<comment type="tissue specificity">
    <text>Sperm.</text>
</comment>
<comment type="miscellaneous">
    <text>Around 30 MSP isoforms may exist in C.elegans.</text>
</comment>
<protein>
    <recommendedName>
        <fullName>Major sperm protein 38</fullName>
        <shortName>MSP</shortName>
    </recommendedName>
</protein>
<gene>
    <name type="primary">msp-38</name>
    <name type="ORF">K08F4.8</name>
</gene>